<organism>
    <name type="scientific">Citrobacter koseri (strain ATCC BAA-895 / CDC 4225-83 / SGSC4696)</name>
    <dbReference type="NCBI Taxonomy" id="290338"/>
    <lineage>
        <taxon>Bacteria</taxon>
        <taxon>Pseudomonadati</taxon>
        <taxon>Pseudomonadota</taxon>
        <taxon>Gammaproteobacteria</taxon>
        <taxon>Enterobacterales</taxon>
        <taxon>Enterobacteriaceae</taxon>
        <taxon>Citrobacter</taxon>
    </lineage>
</organism>
<protein>
    <recommendedName>
        <fullName evidence="1">Endo-type membrane-bound lytic murein transglycosylase A</fullName>
        <ecNumber evidence="1">4.2.2.n2</ecNumber>
    </recommendedName>
    <alternativeName>
        <fullName evidence="1">Peptidoglycan lytic endotransglycosylase</fullName>
    </alternativeName>
</protein>
<comment type="function">
    <text evidence="1">Murein-degrading enzyme. May play a role in recycling of muropeptides during cell elongation and/or cell division. Preferentially cleaves at a distance of more than two disaccharide units from the ends of the glycan chain.</text>
</comment>
<comment type="catalytic activity">
    <reaction evidence="1">
        <text>Endolytic cleavage of the (1-&gt;4)-beta-glycosidic linkage between N-acetylmuramic acid (MurNAc) and N-acetylglucosamine (GlcNAc) residues in peptidoglycan with concomitant formation of a 1,6-anhydrobond in the MurNAc residue.</text>
        <dbReference type="EC" id="4.2.2.n2"/>
    </reaction>
</comment>
<comment type="subcellular location">
    <subcellularLocation>
        <location evidence="1">Cell outer membrane</location>
        <topology evidence="1">Lipid-anchor</topology>
    </subcellularLocation>
</comment>
<comment type="similarity">
    <text evidence="1">Belongs to the transglycosylase Slt family.</text>
</comment>
<proteinExistence type="inferred from homology"/>
<accession>A8AFS5</accession>
<reference key="1">
    <citation type="submission" date="2007-08" db="EMBL/GenBank/DDBJ databases">
        <authorList>
            <consortium name="The Citrobacter koseri Genome Sequencing Project"/>
            <person name="McClelland M."/>
            <person name="Sanderson E.K."/>
            <person name="Porwollik S."/>
            <person name="Spieth J."/>
            <person name="Clifton W.S."/>
            <person name="Latreille P."/>
            <person name="Courtney L."/>
            <person name="Wang C."/>
            <person name="Pepin K."/>
            <person name="Bhonagiri V."/>
            <person name="Nash W."/>
            <person name="Johnson M."/>
            <person name="Thiruvilangam P."/>
            <person name="Wilson R."/>
        </authorList>
    </citation>
    <scope>NUCLEOTIDE SEQUENCE [LARGE SCALE GENOMIC DNA]</scope>
    <source>
        <strain>ATCC BAA-895 / CDC 4225-83 / SGSC4696</strain>
    </source>
</reference>
<keyword id="KW-0998">Cell outer membrane</keyword>
<keyword id="KW-0961">Cell wall biogenesis/degradation</keyword>
<keyword id="KW-0449">Lipoprotein</keyword>
<keyword id="KW-0456">Lyase</keyword>
<keyword id="KW-0472">Membrane</keyword>
<keyword id="KW-0564">Palmitate</keyword>
<keyword id="KW-1185">Reference proteome</keyword>
<keyword id="KW-0732">Signal</keyword>
<gene>
    <name evidence="1" type="primary">emtA</name>
    <name type="ordered locus">CKO_01198</name>
</gene>
<feature type="signal peptide" evidence="1">
    <location>
        <begin position="1"/>
        <end position="15"/>
    </location>
</feature>
<feature type="chain" id="PRO_0000312903" description="Endo-type membrane-bound lytic murein transglycosylase A">
    <location>
        <begin position="16"/>
        <end position="203"/>
    </location>
</feature>
<feature type="lipid moiety-binding region" description="N-palmitoyl cysteine" evidence="1">
    <location>
        <position position="16"/>
    </location>
</feature>
<feature type="lipid moiety-binding region" description="S-diacylglycerol cysteine" evidence="1">
    <location>
        <position position="16"/>
    </location>
</feature>
<evidence type="ECO:0000255" key="1">
    <source>
        <dbReference type="HAMAP-Rule" id="MF_01381"/>
    </source>
</evidence>
<sequence length="203" mass="22276">MKLRWFAFLVVLLAGCSSKQDYKNPPWNAEVPVKRAMQWMPISEKAGEAWGVSPRLITAIIAIESGGNPTVVSKSGAVGLMQLKASTSGRDVYRHMGWSGEPSTSELKNPERNISMGTAYLSILEHGSLAGINDPQVMQYALVVSYANGAGALLRTFSSDRKKAIEKINDLSADEFFEHVAKNHPAPQAPRYIWKLQQALDAM</sequence>
<dbReference type="EC" id="4.2.2.n2" evidence="1"/>
<dbReference type="EMBL" id="CP000822">
    <property type="protein sequence ID" value="ABV12338.1"/>
    <property type="molecule type" value="Genomic_DNA"/>
</dbReference>
<dbReference type="RefSeq" id="WP_012132090.1">
    <property type="nucleotide sequence ID" value="NC_009792.1"/>
</dbReference>
<dbReference type="SMR" id="A8AFS5"/>
<dbReference type="STRING" id="290338.CKO_01198"/>
<dbReference type="CAZy" id="GH23">
    <property type="family name" value="Glycoside Hydrolase Family 23"/>
</dbReference>
<dbReference type="GeneID" id="45135326"/>
<dbReference type="KEGG" id="cko:CKO_01198"/>
<dbReference type="HOGENOM" id="CLU_103257_0_0_6"/>
<dbReference type="OrthoDB" id="92254at2"/>
<dbReference type="Proteomes" id="UP000008148">
    <property type="component" value="Chromosome"/>
</dbReference>
<dbReference type="GO" id="GO:0009279">
    <property type="term" value="C:cell outer membrane"/>
    <property type="evidence" value="ECO:0007669"/>
    <property type="project" value="UniProtKB-SubCell"/>
</dbReference>
<dbReference type="GO" id="GO:0008932">
    <property type="term" value="F:lytic endotransglycosylase activity"/>
    <property type="evidence" value="ECO:0007669"/>
    <property type="project" value="InterPro"/>
</dbReference>
<dbReference type="GO" id="GO:0016998">
    <property type="term" value="P:cell wall macromolecule catabolic process"/>
    <property type="evidence" value="ECO:0007669"/>
    <property type="project" value="UniProtKB-UniRule"/>
</dbReference>
<dbReference type="GO" id="GO:0071555">
    <property type="term" value="P:cell wall organization"/>
    <property type="evidence" value="ECO:0007669"/>
    <property type="project" value="UniProtKB-KW"/>
</dbReference>
<dbReference type="GO" id="GO:0000270">
    <property type="term" value="P:peptidoglycan metabolic process"/>
    <property type="evidence" value="ECO:0007669"/>
    <property type="project" value="InterPro"/>
</dbReference>
<dbReference type="CDD" id="cd16893">
    <property type="entry name" value="LT_MltC_MltE"/>
    <property type="match status" value="1"/>
</dbReference>
<dbReference type="Gene3D" id="1.10.530.10">
    <property type="match status" value="1"/>
</dbReference>
<dbReference type="HAMAP" id="MF_01381">
    <property type="entry name" value="EmtA"/>
    <property type="match status" value="1"/>
</dbReference>
<dbReference type="InterPro" id="IPR023946">
    <property type="entry name" value="EmtA"/>
</dbReference>
<dbReference type="InterPro" id="IPR023346">
    <property type="entry name" value="Lysozyme-like_dom_sf"/>
</dbReference>
<dbReference type="InterPro" id="IPR000189">
    <property type="entry name" value="Transglyc_AS"/>
</dbReference>
<dbReference type="InterPro" id="IPR008258">
    <property type="entry name" value="Transglycosylase_SLT_dom_1"/>
</dbReference>
<dbReference type="NCBIfam" id="NF012014">
    <property type="entry name" value="PRK15470.1"/>
    <property type="match status" value="1"/>
</dbReference>
<dbReference type="PANTHER" id="PTHR37423:SF4">
    <property type="entry name" value="ENDO-TYPE MEMBRANE-BOUND LYTIC MUREIN TRANSGLYCOSYLASE A"/>
    <property type="match status" value="1"/>
</dbReference>
<dbReference type="PANTHER" id="PTHR37423">
    <property type="entry name" value="SOLUBLE LYTIC MUREIN TRANSGLYCOSYLASE-RELATED"/>
    <property type="match status" value="1"/>
</dbReference>
<dbReference type="Pfam" id="PF01464">
    <property type="entry name" value="SLT"/>
    <property type="match status" value="1"/>
</dbReference>
<dbReference type="SUPFAM" id="SSF53955">
    <property type="entry name" value="Lysozyme-like"/>
    <property type="match status" value="1"/>
</dbReference>
<dbReference type="PROSITE" id="PS51257">
    <property type="entry name" value="PROKAR_LIPOPROTEIN"/>
    <property type="match status" value="1"/>
</dbReference>
<dbReference type="PROSITE" id="PS00922">
    <property type="entry name" value="TRANSGLYCOSYLASE"/>
    <property type="match status" value="1"/>
</dbReference>
<name>EMTA_CITK8</name>